<sequence length="198" mass="21618">MAPARLFALLLLFVGGVAESIRETEVIDPQDLLEGRYFSGALPDDEDVVGPGQESDDFELSGSGDLDDLEDSIIGPEVIHPLVPLDNHIPERAGSGSQVPTEPKKLEENEVIPKRISPIEESEDVSNKVSMSSTVQGSNIFERTEVLAALIVGGIVGILFAVFLILLLMYRMKKKDEGSYDLGKKPIYKKAPTNEFYA</sequence>
<comment type="function">
    <text evidence="2">Cell surface proteoglycan which regulates exosome biogenesis in concert with SDCBP and PDCD6IP.</text>
</comment>
<comment type="subunit">
    <text evidence="1 2">Homodimer. Interacts with CDCP1 and SDCBP (By similarity). Interacts (via its cytoplasmic domain) with GIPC (via its PDZ domain). Interacts (via its cytoplasmic domain) with NUDT16L1 (By similarity). Interacts with DNM2; this interaction is markedly enhanced at focal ahesion site upon induction of focal adhesions and stress-fiber formation (By similarity).</text>
</comment>
<comment type="subcellular location">
    <subcellularLocation>
        <location evidence="4">Membrane</location>
        <topology evidence="4">Single-pass type I membrane protein</topology>
    </subcellularLocation>
    <subcellularLocation>
        <location evidence="2">Secreted</location>
    </subcellularLocation>
    <text evidence="2">Shedding of the ectodomain produces a soluble form.</text>
</comment>
<comment type="PTM">
    <text evidence="2">Shedding is enhanced by a number of factors such as heparanase, thrombin or EGF. Also by stress and wound healing. PMA-mediated shedding is inhibited by TIMP3 (By similarity).</text>
</comment>
<comment type="PTM">
    <text evidence="3">O-glycosylated; contains both chondroitin sulfate and heparan sulfate. Ser-39, Ser-61 and Ser-63 can all be modified by either chondroitin sulfate or heparan sulfate, and the protein exists in forms that contain only chondroitin sulfate, only heparan sulfate and both chondroitin sulfate and heparan sulfate.</text>
</comment>
<comment type="similarity">
    <text evidence="5">Belongs to the syndecan proteoglycan family.</text>
</comment>
<feature type="signal peptide" evidence="4">
    <location>
        <begin position="1"/>
        <end position="18"/>
    </location>
</feature>
<feature type="chain" id="PRO_0000329297" description="Syndecan-4">
    <location>
        <begin position="19"/>
        <end position="198"/>
    </location>
</feature>
<feature type="topological domain" description="Extracellular" evidence="4">
    <location>
        <begin position="19"/>
        <end position="145"/>
    </location>
</feature>
<feature type="transmembrane region" description="Helical" evidence="4">
    <location>
        <begin position="146"/>
        <end position="170"/>
    </location>
</feature>
<feature type="topological domain" description="Cytoplasmic" evidence="4">
    <location>
        <begin position="171"/>
        <end position="198"/>
    </location>
</feature>
<feature type="glycosylation site" description="O-linked (Xyl...) (glycosaminoglycan) serine" evidence="3">
    <location>
        <position position="39"/>
    </location>
</feature>
<feature type="glycosylation site" description="O-linked (Xyl...) (glycosaminoglycan) serine" evidence="3">
    <location>
        <position position="61"/>
    </location>
</feature>
<feature type="glycosylation site" description="O-linked (Xyl...) (glycosaminoglycan) serine" evidence="3">
    <location>
        <position position="63"/>
    </location>
</feature>
<feature type="glycosylation site" description="O-linked (Xyl...) (chondroitin sulfate) serine" evidence="2">
    <location>
        <position position="95"/>
    </location>
</feature>
<name>SDC4_PONAB</name>
<reference key="1">
    <citation type="submission" date="2004-11" db="EMBL/GenBank/DDBJ databases">
        <authorList>
            <consortium name="The German cDNA consortium"/>
        </authorList>
    </citation>
    <scope>NUCLEOTIDE SEQUENCE [LARGE SCALE MRNA]</scope>
    <source>
        <tissue>Kidney</tissue>
    </source>
</reference>
<gene>
    <name evidence="2" type="primary">SDC4</name>
</gene>
<accession>Q5RAT9</accession>
<dbReference type="EMBL" id="CR858923">
    <property type="protein sequence ID" value="CAH91121.1"/>
    <property type="molecule type" value="mRNA"/>
</dbReference>
<dbReference type="RefSeq" id="NP_001127378.1">
    <property type="nucleotide sequence ID" value="NM_001133906.1"/>
</dbReference>
<dbReference type="RefSeq" id="XP_009231914.1">
    <property type="nucleotide sequence ID" value="XM_009233639.1"/>
</dbReference>
<dbReference type="BMRB" id="Q5RAT9"/>
<dbReference type="SMR" id="Q5RAT9"/>
<dbReference type="FunCoup" id="Q5RAT9">
    <property type="interactions" value="461"/>
</dbReference>
<dbReference type="STRING" id="9601.ENSPPYP00000012352"/>
<dbReference type="GlyCosmos" id="Q5RAT9">
    <property type="glycosylation" value="3 sites, No reported glycans"/>
</dbReference>
<dbReference type="Ensembl" id="ENSPPYT00000040026.1">
    <property type="protein sequence ID" value="ENSPPYP00000034832.1"/>
    <property type="gene ID" value="ENSPPYG00000038657.1"/>
</dbReference>
<dbReference type="GeneID" id="100174444"/>
<dbReference type="KEGG" id="pon:100174444"/>
<dbReference type="CTD" id="6385"/>
<dbReference type="eggNOG" id="ENOG502S1SZ">
    <property type="taxonomic scope" value="Eukaryota"/>
</dbReference>
<dbReference type="GeneTree" id="ENSGT00940000160663"/>
<dbReference type="HOGENOM" id="CLU_046599_3_0_1"/>
<dbReference type="InParanoid" id="Q5RAT9"/>
<dbReference type="OMA" id="WVPTEPK"/>
<dbReference type="OrthoDB" id="10044468at2759"/>
<dbReference type="TreeFam" id="TF320463"/>
<dbReference type="Proteomes" id="UP000001595">
    <property type="component" value="Chromosome 20"/>
</dbReference>
<dbReference type="GO" id="GO:0009986">
    <property type="term" value="C:cell surface"/>
    <property type="evidence" value="ECO:0007669"/>
    <property type="project" value="TreeGrafter"/>
</dbReference>
<dbReference type="GO" id="GO:0005576">
    <property type="term" value="C:extracellular region"/>
    <property type="evidence" value="ECO:0007669"/>
    <property type="project" value="UniProtKB-SubCell"/>
</dbReference>
<dbReference type="GO" id="GO:0016020">
    <property type="term" value="C:membrane"/>
    <property type="evidence" value="ECO:0007669"/>
    <property type="project" value="UniProtKB-SubCell"/>
</dbReference>
<dbReference type="GO" id="GO:0016477">
    <property type="term" value="P:cell migration"/>
    <property type="evidence" value="ECO:0007669"/>
    <property type="project" value="TreeGrafter"/>
</dbReference>
<dbReference type="InterPro" id="IPR003585">
    <property type="entry name" value="Neurexin-like"/>
</dbReference>
<dbReference type="InterPro" id="IPR001050">
    <property type="entry name" value="Syndecan"/>
</dbReference>
<dbReference type="InterPro" id="IPR027789">
    <property type="entry name" value="Syndecan/Neurexin_dom"/>
</dbReference>
<dbReference type="InterPro" id="IPR030479">
    <property type="entry name" value="Syndecan_CS"/>
</dbReference>
<dbReference type="PANTHER" id="PTHR10915">
    <property type="entry name" value="SYNDECAN"/>
    <property type="match status" value="1"/>
</dbReference>
<dbReference type="PANTHER" id="PTHR10915:SF3">
    <property type="entry name" value="SYNDECAN-4"/>
    <property type="match status" value="1"/>
</dbReference>
<dbReference type="Pfam" id="PF01034">
    <property type="entry name" value="Syndecan"/>
    <property type="match status" value="1"/>
</dbReference>
<dbReference type="SMART" id="SM00294">
    <property type="entry name" value="4.1m"/>
    <property type="match status" value="1"/>
</dbReference>
<dbReference type="PROSITE" id="PS00964">
    <property type="entry name" value="SYNDECAN"/>
    <property type="match status" value="1"/>
</dbReference>
<keyword id="KW-0325">Glycoprotein</keyword>
<keyword id="KW-0357">Heparan sulfate</keyword>
<keyword id="KW-0472">Membrane</keyword>
<keyword id="KW-0654">Proteoglycan</keyword>
<keyword id="KW-1185">Reference proteome</keyword>
<keyword id="KW-0964">Secreted</keyword>
<keyword id="KW-0732">Signal</keyword>
<keyword id="KW-0812">Transmembrane</keyword>
<keyword id="KW-1133">Transmembrane helix</keyword>
<protein>
    <recommendedName>
        <fullName evidence="2">Syndecan-4</fullName>
        <shortName>SYND4</shortName>
    </recommendedName>
</protein>
<organism>
    <name type="scientific">Pongo abelii</name>
    <name type="common">Sumatran orangutan</name>
    <name type="synonym">Pongo pygmaeus abelii</name>
    <dbReference type="NCBI Taxonomy" id="9601"/>
    <lineage>
        <taxon>Eukaryota</taxon>
        <taxon>Metazoa</taxon>
        <taxon>Chordata</taxon>
        <taxon>Craniata</taxon>
        <taxon>Vertebrata</taxon>
        <taxon>Euteleostomi</taxon>
        <taxon>Mammalia</taxon>
        <taxon>Eutheria</taxon>
        <taxon>Euarchontoglires</taxon>
        <taxon>Primates</taxon>
        <taxon>Haplorrhini</taxon>
        <taxon>Catarrhini</taxon>
        <taxon>Hominidae</taxon>
        <taxon>Pongo</taxon>
    </lineage>
</organism>
<evidence type="ECO:0000250" key="1">
    <source>
        <dbReference type="UniProtKB" id="O35988"/>
    </source>
</evidence>
<evidence type="ECO:0000250" key="2">
    <source>
        <dbReference type="UniProtKB" id="P31431"/>
    </source>
</evidence>
<evidence type="ECO:0000250" key="3">
    <source>
        <dbReference type="UniProtKB" id="P34901"/>
    </source>
</evidence>
<evidence type="ECO:0000255" key="4"/>
<evidence type="ECO:0000305" key="5"/>
<proteinExistence type="evidence at transcript level"/>